<feature type="chain" id="PRO_1000024043" description="Dihydroorotase">
    <location>
        <begin position="1"/>
        <end position="344"/>
    </location>
</feature>
<feature type="active site" evidence="1">
    <location>
        <position position="248"/>
    </location>
</feature>
<feature type="binding site" evidence="1">
    <location>
        <position position="14"/>
    </location>
    <ligand>
        <name>Zn(2+)</name>
        <dbReference type="ChEBI" id="CHEBI:29105"/>
        <label>1</label>
    </ligand>
</feature>
<feature type="binding site" evidence="1">
    <location>
        <begin position="16"/>
        <end position="18"/>
    </location>
    <ligand>
        <name>substrate</name>
    </ligand>
</feature>
<feature type="binding site" evidence="1">
    <location>
        <position position="16"/>
    </location>
    <ligand>
        <name>Zn(2+)</name>
        <dbReference type="ChEBI" id="CHEBI:29105"/>
        <label>1</label>
    </ligand>
</feature>
<feature type="binding site" evidence="1">
    <location>
        <position position="42"/>
    </location>
    <ligand>
        <name>substrate</name>
    </ligand>
</feature>
<feature type="binding site" description="via carbamate group" evidence="1">
    <location>
        <position position="100"/>
    </location>
    <ligand>
        <name>Zn(2+)</name>
        <dbReference type="ChEBI" id="CHEBI:29105"/>
        <label>1</label>
    </ligand>
</feature>
<feature type="binding site" description="via carbamate group" evidence="1">
    <location>
        <position position="100"/>
    </location>
    <ligand>
        <name>Zn(2+)</name>
        <dbReference type="ChEBI" id="CHEBI:29105"/>
        <label>2</label>
    </ligand>
</feature>
<feature type="binding site" evidence="1">
    <location>
        <position position="137"/>
    </location>
    <ligand>
        <name>substrate</name>
    </ligand>
</feature>
<feature type="binding site" evidence="1">
    <location>
        <position position="137"/>
    </location>
    <ligand>
        <name>Zn(2+)</name>
        <dbReference type="ChEBI" id="CHEBI:29105"/>
        <label>2</label>
    </ligand>
</feature>
<feature type="binding site" evidence="1">
    <location>
        <position position="175"/>
    </location>
    <ligand>
        <name>Zn(2+)</name>
        <dbReference type="ChEBI" id="CHEBI:29105"/>
        <label>2</label>
    </ligand>
</feature>
<feature type="binding site" evidence="1">
    <location>
        <position position="220"/>
    </location>
    <ligand>
        <name>substrate</name>
    </ligand>
</feature>
<feature type="binding site" evidence="1">
    <location>
        <position position="248"/>
    </location>
    <ligand>
        <name>Zn(2+)</name>
        <dbReference type="ChEBI" id="CHEBI:29105"/>
        <label>1</label>
    </ligand>
</feature>
<feature type="binding site" evidence="1">
    <location>
        <position position="252"/>
    </location>
    <ligand>
        <name>substrate</name>
    </ligand>
</feature>
<feature type="binding site" evidence="1">
    <location>
        <position position="264"/>
    </location>
    <ligand>
        <name>substrate</name>
    </ligand>
</feature>
<feature type="modified residue" description="N6-carboxylysine" evidence="1">
    <location>
        <position position="100"/>
    </location>
</feature>
<reference key="1">
    <citation type="journal article" date="2010" name="PLoS ONE">
        <title>The complete genome sequence of Cupriavidus metallidurans strain CH34, a master survivalist in harsh and anthropogenic environments.</title>
        <authorList>
            <person name="Janssen P.J."/>
            <person name="Van Houdt R."/>
            <person name="Moors H."/>
            <person name="Monsieurs P."/>
            <person name="Morin N."/>
            <person name="Michaux A."/>
            <person name="Benotmane M.A."/>
            <person name="Leys N."/>
            <person name="Vallaeys T."/>
            <person name="Lapidus A."/>
            <person name="Monchy S."/>
            <person name="Medigue C."/>
            <person name="Taghavi S."/>
            <person name="McCorkle S."/>
            <person name="Dunn J."/>
            <person name="van der Lelie D."/>
            <person name="Mergeay M."/>
        </authorList>
    </citation>
    <scope>NUCLEOTIDE SEQUENCE [LARGE SCALE GENOMIC DNA]</scope>
    <source>
        <strain>ATCC 43123 / DSM 2839 / NBRC 102507 / CH34</strain>
    </source>
</reference>
<organism>
    <name type="scientific">Cupriavidus metallidurans (strain ATCC 43123 / DSM 2839 / NBRC 102507 / CH34)</name>
    <name type="common">Ralstonia metallidurans</name>
    <dbReference type="NCBI Taxonomy" id="266264"/>
    <lineage>
        <taxon>Bacteria</taxon>
        <taxon>Pseudomonadati</taxon>
        <taxon>Pseudomonadota</taxon>
        <taxon>Betaproteobacteria</taxon>
        <taxon>Burkholderiales</taxon>
        <taxon>Burkholderiaceae</taxon>
        <taxon>Cupriavidus</taxon>
    </lineage>
</organism>
<dbReference type="EC" id="3.5.2.3" evidence="1"/>
<dbReference type="EMBL" id="CP000352">
    <property type="protein sequence ID" value="ABF07292.1"/>
    <property type="molecule type" value="Genomic_DNA"/>
</dbReference>
<dbReference type="RefSeq" id="WP_011515282.1">
    <property type="nucleotide sequence ID" value="NC_007973.1"/>
</dbReference>
<dbReference type="SMR" id="Q1LRD4"/>
<dbReference type="STRING" id="266264.Rmet_0406"/>
<dbReference type="MEROPS" id="M38.A02"/>
<dbReference type="KEGG" id="rme:Rmet_0406"/>
<dbReference type="eggNOG" id="COG0418">
    <property type="taxonomic scope" value="Bacteria"/>
</dbReference>
<dbReference type="HOGENOM" id="CLU_041558_1_0_4"/>
<dbReference type="UniPathway" id="UPA00070">
    <property type="reaction ID" value="UER00117"/>
</dbReference>
<dbReference type="Proteomes" id="UP000002429">
    <property type="component" value="Chromosome"/>
</dbReference>
<dbReference type="GO" id="GO:0005829">
    <property type="term" value="C:cytosol"/>
    <property type="evidence" value="ECO:0007669"/>
    <property type="project" value="TreeGrafter"/>
</dbReference>
<dbReference type="GO" id="GO:0004151">
    <property type="term" value="F:dihydroorotase activity"/>
    <property type="evidence" value="ECO:0007669"/>
    <property type="project" value="UniProtKB-UniRule"/>
</dbReference>
<dbReference type="GO" id="GO:0008270">
    <property type="term" value="F:zinc ion binding"/>
    <property type="evidence" value="ECO:0007669"/>
    <property type="project" value="UniProtKB-UniRule"/>
</dbReference>
<dbReference type="GO" id="GO:0006207">
    <property type="term" value="P:'de novo' pyrimidine nucleobase biosynthetic process"/>
    <property type="evidence" value="ECO:0007669"/>
    <property type="project" value="TreeGrafter"/>
</dbReference>
<dbReference type="GO" id="GO:0044205">
    <property type="term" value="P:'de novo' UMP biosynthetic process"/>
    <property type="evidence" value="ECO:0007669"/>
    <property type="project" value="UniProtKB-UniRule"/>
</dbReference>
<dbReference type="CDD" id="cd01294">
    <property type="entry name" value="DHOase"/>
    <property type="match status" value="1"/>
</dbReference>
<dbReference type="FunFam" id="3.20.20.140:FF:000006">
    <property type="entry name" value="Dihydroorotase"/>
    <property type="match status" value="1"/>
</dbReference>
<dbReference type="Gene3D" id="3.20.20.140">
    <property type="entry name" value="Metal-dependent hydrolases"/>
    <property type="match status" value="1"/>
</dbReference>
<dbReference type="HAMAP" id="MF_00219">
    <property type="entry name" value="PyrC_classII"/>
    <property type="match status" value="1"/>
</dbReference>
<dbReference type="InterPro" id="IPR006680">
    <property type="entry name" value="Amidohydro-rel"/>
</dbReference>
<dbReference type="InterPro" id="IPR004721">
    <property type="entry name" value="DHOdimr"/>
</dbReference>
<dbReference type="InterPro" id="IPR002195">
    <property type="entry name" value="Dihydroorotase_CS"/>
</dbReference>
<dbReference type="InterPro" id="IPR032466">
    <property type="entry name" value="Metal_Hydrolase"/>
</dbReference>
<dbReference type="NCBIfam" id="TIGR00856">
    <property type="entry name" value="pyrC_dimer"/>
    <property type="match status" value="1"/>
</dbReference>
<dbReference type="PANTHER" id="PTHR43137">
    <property type="entry name" value="DIHYDROOROTASE"/>
    <property type="match status" value="1"/>
</dbReference>
<dbReference type="PANTHER" id="PTHR43137:SF1">
    <property type="entry name" value="DIHYDROOROTASE"/>
    <property type="match status" value="1"/>
</dbReference>
<dbReference type="Pfam" id="PF01979">
    <property type="entry name" value="Amidohydro_1"/>
    <property type="match status" value="1"/>
</dbReference>
<dbReference type="PIRSF" id="PIRSF001237">
    <property type="entry name" value="DHOdimr"/>
    <property type="match status" value="1"/>
</dbReference>
<dbReference type="SUPFAM" id="SSF51556">
    <property type="entry name" value="Metallo-dependent hydrolases"/>
    <property type="match status" value="1"/>
</dbReference>
<dbReference type="PROSITE" id="PS00482">
    <property type="entry name" value="DIHYDROOROTASE_1"/>
    <property type="match status" value="1"/>
</dbReference>
<dbReference type="PROSITE" id="PS00483">
    <property type="entry name" value="DIHYDROOROTASE_2"/>
    <property type="match status" value="1"/>
</dbReference>
<proteinExistence type="inferred from homology"/>
<sequence length="344" mass="37551">MTQKLTITRPDDWHLHLRDGAALAAVLPDTARQFARAIIMPNLKPPVTTVDQASAYRARILAALPAGMAFEPLMTLYLTDNTPPEEIVAARASGFVHGVKLYPAGATTNSDAGVTDIRRCAATLEAMQREGVPLLVHGEVTDGDIDIFDREAVFIDRVMKPLRRDFPELKVVFEHITTRDAAQYVAEAEGPVGATITAHHLLYNRNAIFTGGIRPHYYCLPVLKREIHREALVKAATSGSPRFFLGTDSAPHARGLKEHACGCAGCYTALHAMELYAEAFDAAGALDKLEAFSSFNGPAFYGLPRNSGTLTLTREDWELPAELPYGDTTLVPLRAGETLRWKAS</sequence>
<name>PYRC_CUPMC</name>
<protein>
    <recommendedName>
        <fullName evidence="1">Dihydroorotase</fullName>
        <shortName evidence="1">DHOase</shortName>
        <ecNumber evidence="1">3.5.2.3</ecNumber>
    </recommendedName>
</protein>
<comment type="function">
    <text evidence="1">Catalyzes the reversible cyclization of carbamoyl aspartate to dihydroorotate.</text>
</comment>
<comment type="catalytic activity">
    <reaction evidence="1">
        <text>(S)-dihydroorotate + H2O = N-carbamoyl-L-aspartate + H(+)</text>
        <dbReference type="Rhea" id="RHEA:24296"/>
        <dbReference type="ChEBI" id="CHEBI:15377"/>
        <dbReference type="ChEBI" id="CHEBI:15378"/>
        <dbReference type="ChEBI" id="CHEBI:30864"/>
        <dbReference type="ChEBI" id="CHEBI:32814"/>
        <dbReference type="EC" id="3.5.2.3"/>
    </reaction>
</comment>
<comment type="cofactor">
    <cofactor evidence="1">
        <name>Zn(2+)</name>
        <dbReference type="ChEBI" id="CHEBI:29105"/>
    </cofactor>
    <text evidence="1">Binds 2 Zn(2+) ions per subunit.</text>
</comment>
<comment type="pathway">
    <text evidence="1">Pyrimidine metabolism; UMP biosynthesis via de novo pathway; (S)-dihydroorotate from bicarbonate: step 3/3.</text>
</comment>
<comment type="subunit">
    <text evidence="1">Homodimer.</text>
</comment>
<comment type="similarity">
    <text evidence="1">Belongs to the metallo-dependent hydrolases superfamily. DHOase family. Class II DHOase subfamily.</text>
</comment>
<evidence type="ECO:0000255" key="1">
    <source>
        <dbReference type="HAMAP-Rule" id="MF_00219"/>
    </source>
</evidence>
<gene>
    <name evidence="1" type="primary">pyrC</name>
    <name type="ordered locus">Rmet_0406</name>
</gene>
<accession>Q1LRD4</accession>
<keyword id="KW-0378">Hydrolase</keyword>
<keyword id="KW-0479">Metal-binding</keyword>
<keyword id="KW-0665">Pyrimidine biosynthesis</keyword>
<keyword id="KW-1185">Reference proteome</keyword>
<keyword id="KW-0862">Zinc</keyword>